<comment type="function">
    <text evidence="1">Na(+)/H(+) antiporter that extrudes sodium in exchange for external protons.</text>
</comment>
<comment type="catalytic activity">
    <reaction evidence="1">
        <text>Na(+)(in) + 2 H(+)(out) = Na(+)(out) + 2 H(+)(in)</text>
        <dbReference type="Rhea" id="RHEA:29251"/>
        <dbReference type="ChEBI" id="CHEBI:15378"/>
        <dbReference type="ChEBI" id="CHEBI:29101"/>
    </reaction>
    <physiologicalReaction direction="left-to-right" evidence="1">
        <dbReference type="Rhea" id="RHEA:29252"/>
    </physiologicalReaction>
</comment>
<comment type="subcellular location">
    <subcellularLocation>
        <location evidence="1">Cell inner membrane</location>
        <topology evidence="1">Multi-pass membrane protein</topology>
    </subcellularLocation>
</comment>
<comment type="similarity">
    <text evidence="1">Belongs to the NhaA Na(+)/H(+) (TC 2.A.33) antiporter family.</text>
</comment>
<evidence type="ECO:0000255" key="1">
    <source>
        <dbReference type="HAMAP-Rule" id="MF_01844"/>
    </source>
</evidence>
<name>NHAA_RHILO</name>
<proteinExistence type="inferred from homology"/>
<feature type="chain" id="PRO_0000334389" description="Na(+)/H(+) antiporter NhaA">
    <location>
        <begin position="1"/>
        <end position="398"/>
    </location>
</feature>
<feature type="transmembrane region" description="Helical" evidence="1">
    <location>
        <begin position="21"/>
        <end position="41"/>
    </location>
</feature>
<feature type="transmembrane region" description="Helical" evidence="1">
    <location>
        <begin position="56"/>
        <end position="76"/>
    </location>
</feature>
<feature type="transmembrane region" description="Helical" evidence="1">
    <location>
        <begin position="94"/>
        <end position="114"/>
    </location>
</feature>
<feature type="transmembrane region" description="Helical" evidence="1">
    <location>
        <begin position="124"/>
        <end position="144"/>
    </location>
</feature>
<feature type="transmembrane region" description="Helical" evidence="1">
    <location>
        <begin position="153"/>
        <end position="173"/>
    </location>
</feature>
<feature type="transmembrane region" description="Helical" evidence="1">
    <location>
        <begin position="176"/>
        <end position="196"/>
    </location>
</feature>
<feature type="transmembrane region" description="Helical" evidence="1">
    <location>
        <begin position="201"/>
        <end position="221"/>
    </location>
</feature>
<feature type="transmembrane region" description="Helical" evidence="1">
    <location>
        <begin position="263"/>
        <end position="283"/>
    </location>
</feature>
<feature type="transmembrane region" description="Helical" evidence="1">
    <location>
        <begin position="284"/>
        <end position="304"/>
    </location>
</feature>
<feature type="transmembrane region" description="Helical" evidence="1">
    <location>
        <begin position="306"/>
        <end position="326"/>
    </location>
</feature>
<feature type="transmembrane region" description="Helical" evidence="1">
    <location>
        <begin position="333"/>
        <end position="353"/>
    </location>
</feature>
<feature type="transmembrane region" description="Helical" evidence="1">
    <location>
        <begin position="367"/>
        <end position="387"/>
    </location>
</feature>
<reference key="1">
    <citation type="journal article" date="2000" name="DNA Res.">
        <title>Complete genome structure of the nitrogen-fixing symbiotic bacterium Mesorhizobium loti.</title>
        <authorList>
            <person name="Kaneko T."/>
            <person name="Nakamura Y."/>
            <person name="Sato S."/>
            <person name="Asamizu E."/>
            <person name="Kato T."/>
            <person name="Sasamoto S."/>
            <person name="Watanabe A."/>
            <person name="Idesawa K."/>
            <person name="Ishikawa A."/>
            <person name="Kawashima K."/>
            <person name="Kimura T."/>
            <person name="Kishida Y."/>
            <person name="Kiyokawa C."/>
            <person name="Kohara M."/>
            <person name="Matsumoto M."/>
            <person name="Matsuno A."/>
            <person name="Mochizuki Y."/>
            <person name="Nakayama S."/>
            <person name="Nakazaki N."/>
            <person name="Shimpo S."/>
            <person name="Sugimoto M."/>
            <person name="Takeuchi C."/>
            <person name="Yamada M."/>
            <person name="Tabata S."/>
        </authorList>
    </citation>
    <scope>NUCLEOTIDE SEQUENCE [LARGE SCALE GENOMIC DNA]</scope>
    <source>
        <strain>LMG 29417 / CECT 9101 / MAFF 303099</strain>
    </source>
</reference>
<protein>
    <recommendedName>
        <fullName evidence="1">Na(+)/H(+) antiporter NhaA</fullName>
    </recommendedName>
    <alternativeName>
        <fullName evidence="1">Sodium/proton antiporter NhaA</fullName>
    </alternativeName>
</protein>
<organism>
    <name type="scientific">Mesorhizobium japonicum (strain LMG 29417 / CECT 9101 / MAFF 303099)</name>
    <name type="common">Mesorhizobium loti (strain MAFF 303099)</name>
    <dbReference type="NCBI Taxonomy" id="266835"/>
    <lineage>
        <taxon>Bacteria</taxon>
        <taxon>Pseudomonadati</taxon>
        <taxon>Pseudomonadota</taxon>
        <taxon>Alphaproteobacteria</taxon>
        <taxon>Hyphomicrobiales</taxon>
        <taxon>Phyllobacteriaceae</taxon>
        <taxon>Mesorhizobium</taxon>
    </lineage>
</organism>
<dbReference type="EMBL" id="BA000012">
    <property type="protein sequence ID" value="BAB51783.1"/>
    <property type="molecule type" value="Genomic_DNA"/>
</dbReference>
<dbReference type="RefSeq" id="WP_010913122.1">
    <property type="nucleotide sequence ID" value="NC_002678.2"/>
</dbReference>
<dbReference type="SMR" id="Q98C38"/>
<dbReference type="KEGG" id="mlo:mlr5309"/>
<dbReference type="PATRIC" id="fig|266835.9.peg.4209"/>
<dbReference type="eggNOG" id="COG3004">
    <property type="taxonomic scope" value="Bacteria"/>
</dbReference>
<dbReference type="HOGENOM" id="CLU_015803_1_0_5"/>
<dbReference type="Proteomes" id="UP000000552">
    <property type="component" value="Chromosome"/>
</dbReference>
<dbReference type="GO" id="GO:0005886">
    <property type="term" value="C:plasma membrane"/>
    <property type="evidence" value="ECO:0007669"/>
    <property type="project" value="UniProtKB-SubCell"/>
</dbReference>
<dbReference type="GO" id="GO:0015385">
    <property type="term" value="F:sodium:proton antiporter activity"/>
    <property type="evidence" value="ECO:0007669"/>
    <property type="project" value="TreeGrafter"/>
</dbReference>
<dbReference type="GO" id="GO:0006885">
    <property type="term" value="P:regulation of pH"/>
    <property type="evidence" value="ECO:0007669"/>
    <property type="project" value="InterPro"/>
</dbReference>
<dbReference type="Gene3D" id="1.20.1530.10">
    <property type="entry name" value="Na+/H+ antiporter like domain"/>
    <property type="match status" value="1"/>
</dbReference>
<dbReference type="HAMAP" id="MF_01844">
    <property type="entry name" value="NhaA"/>
    <property type="match status" value="1"/>
</dbReference>
<dbReference type="InterPro" id="IPR023171">
    <property type="entry name" value="Na/H_antiporter_dom_sf"/>
</dbReference>
<dbReference type="InterPro" id="IPR004670">
    <property type="entry name" value="NhaA"/>
</dbReference>
<dbReference type="NCBIfam" id="TIGR00773">
    <property type="entry name" value="NhaA"/>
    <property type="match status" value="1"/>
</dbReference>
<dbReference type="NCBIfam" id="NF007111">
    <property type="entry name" value="PRK09560.1"/>
    <property type="match status" value="1"/>
</dbReference>
<dbReference type="NCBIfam" id="NF007112">
    <property type="entry name" value="PRK09561.1"/>
    <property type="match status" value="1"/>
</dbReference>
<dbReference type="PANTHER" id="PTHR30341:SF0">
    <property type="entry name" value="NA(+)_H(+) ANTIPORTER NHAA"/>
    <property type="match status" value="1"/>
</dbReference>
<dbReference type="PANTHER" id="PTHR30341">
    <property type="entry name" value="SODIUM ION/PROTON ANTIPORTER NHAA-RELATED"/>
    <property type="match status" value="1"/>
</dbReference>
<dbReference type="Pfam" id="PF06965">
    <property type="entry name" value="Na_H_antiport_1"/>
    <property type="match status" value="1"/>
</dbReference>
<keyword id="KW-0050">Antiport</keyword>
<keyword id="KW-0997">Cell inner membrane</keyword>
<keyword id="KW-1003">Cell membrane</keyword>
<keyword id="KW-0406">Ion transport</keyword>
<keyword id="KW-0472">Membrane</keyword>
<keyword id="KW-0915">Sodium</keyword>
<keyword id="KW-0739">Sodium transport</keyword>
<keyword id="KW-0812">Transmembrane</keyword>
<keyword id="KW-1133">Transmembrane helix</keyword>
<keyword id="KW-0813">Transport</keyword>
<gene>
    <name evidence="1" type="primary">nhaA</name>
    <name type="ordered locus">mlr5309</name>
</gene>
<sequence>MQDLKQRPVSVFREFLDSEAAGGIILMVAAALALIVANSPLAETYFSVLHAYLGPLSVSHWVNDGLMAVFFLLVGLEIKREMLDGQLSTWPRRVLPGIAAAGGMLVPALVYVFINRNNSAALSGWAIPTATDIAFALGVLSLLGSRVPASLKVFLTALAIIDDLGAVIIIAIFYTSGLSLAYLGAAFAVIAALVVLNRMRVMTLLPYLVLGAILWVLVLKSGVHATLAGVALALTIPLERSAGVGHDLDHSPLHRLEHGLHKIVPFFVIPIFGFANAGVSLAGLSLGALIEPLTLGVAAGLVVGKLVGVFGSSALAIRLGLADLPAHTGWSHMIGISLLCGIGFTMSLFIGLLAFASDVALQDAVKVGILAGSFVAAILGAAVLLMAPAAGVAEEETE</sequence>
<accession>Q98C38</accession>